<name>PTCRA_MOUSE</name>
<dbReference type="EMBL" id="U16958">
    <property type="protein sequence ID" value="AAA58963.1"/>
    <property type="status" value="ALT_INIT"/>
    <property type="molecule type" value="mRNA"/>
</dbReference>
<dbReference type="EMBL" id="U27268">
    <property type="protein sequence ID" value="AAA84398.1"/>
    <property type="molecule type" value="Genomic_DNA"/>
</dbReference>
<dbReference type="EMBL" id="BC119062">
    <property type="protein sequence ID" value="AAI19063.1"/>
    <property type="status" value="ALT_INIT"/>
    <property type="molecule type" value="mRNA"/>
</dbReference>
<dbReference type="EMBL" id="BC120746">
    <property type="protein sequence ID" value="AAI20747.1"/>
    <property type="status" value="ALT_INIT"/>
    <property type="molecule type" value="mRNA"/>
</dbReference>
<dbReference type="CCDS" id="CCDS28840.1">
    <molecule id="P0C6B2-1"/>
</dbReference>
<dbReference type="RefSeq" id="NP_035325.2">
    <molecule id="P0C6B2-1"/>
    <property type="nucleotide sequence ID" value="NM_011195.3"/>
</dbReference>
<dbReference type="SMR" id="P0C6B2"/>
<dbReference type="FunCoup" id="P0C6B2">
    <property type="interactions" value="566"/>
</dbReference>
<dbReference type="STRING" id="10090.ENSMUSP00000035683"/>
<dbReference type="GlyCosmos" id="P0C6B2">
    <property type="glycosylation" value="2 sites, No reported glycans"/>
</dbReference>
<dbReference type="GlyGen" id="P0C6B2">
    <property type="glycosylation" value="2 sites"/>
</dbReference>
<dbReference type="PhosphoSitePlus" id="P0C6B2"/>
<dbReference type="PaxDb" id="10090-ENSMUSP00000035683"/>
<dbReference type="ProteomicsDB" id="291616">
    <molecule id="P0C6B2-1"/>
</dbReference>
<dbReference type="ProteomicsDB" id="291617">
    <molecule id="P0C6B2-2"/>
</dbReference>
<dbReference type="Ensembl" id="ENSMUST00000041012.10">
    <molecule id="P0C6B2-1"/>
    <property type="protein sequence ID" value="ENSMUSP00000035683.10"/>
    <property type="gene ID" value="ENSMUSG00000036858.9"/>
</dbReference>
<dbReference type="GeneID" id="19208"/>
<dbReference type="KEGG" id="mmu:19208"/>
<dbReference type="UCSC" id="uc008cuh.1">
    <molecule id="P0C6B2-1"/>
    <property type="organism name" value="mouse"/>
</dbReference>
<dbReference type="AGR" id="MGI:104857"/>
<dbReference type="CTD" id="171558"/>
<dbReference type="MGI" id="MGI:104857">
    <property type="gene designation" value="Ptcra"/>
</dbReference>
<dbReference type="eggNOG" id="ENOG502SAGI">
    <property type="taxonomic scope" value="Eukaryota"/>
</dbReference>
<dbReference type="GeneTree" id="ENSGT00390000007712"/>
<dbReference type="InParanoid" id="P0C6B2"/>
<dbReference type="OrthoDB" id="8930604at2759"/>
<dbReference type="TreeFam" id="TF337868"/>
<dbReference type="BioGRID-ORCS" id="19208">
    <property type="hits" value="2 hits in 70 CRISPR screens"/>
</dbReference>
<dbReference type="PRO" id="PR:P0C6B2"/>
<dbReference type="Proteomes" id="UP000000589">
    <property type="component" value="Chromosome 17"/>
</dbReference>
<dbReference type="RNAct" id="P0C6B2">
    <property type="molecule type" value="protein"/>
</dbReference>
<dbReference type="GO" id="GO:0005886">
    <property type="term" value="C:plasma membrane"/>
    <property type="evidence" value="ECO:0000250"/>
    <property type="project" value="UniProtKB"/>
</dbReference>
<dbReference type="GO" id="GO:0046632">
    <property type="term" value="P:alpha-beta T cell differentiation"/>
    <property type="evidence" value="ECO:0000250"/>
    <property type="project" value="UniProtKB"/>
</dbReference>
<dbReference type="GO" id="GO:0070244">
    <property type="term" value="P:negative regulation of thymocyte apoptotic process"/>
    <property type="evidence" value="ECO:0000315"/>
    <property type="project" value="MGI"/>
</dbReference>
<dbReference type="GO" id="GO:0070242">
    <property type="term" value="P:thymocyte apoptotic process"/>
    <property type="evidence" value="ECO:0000315"/>
    <property type="project" value="MGI"/>
</dbReference>
<dbReference type="FunFam" id="2.60.40.10:FF:001091">
    <property type="entry name" value="Pre T-cell antigen receptor alpha"/>
    <property type="match status" value="1"/>
</dbReference>
<dbReference type="Gene3D" id="2.60.40.10">
    <property type="entry name" value="Immunoglobulins"/>
    <property type="match status" value="1"/>
</dbReference>
<dbReference type="InterPro" id="IPR036179">
    <property type="entry name" value="Ig-like_dom_sf"/>
</dbReference>
<dbReference type="InterPro" id="IPR013783">
    <property type="entry name" value="Ig-like_fold"/>
</dbReference>
<dbReference type="InterPro" id="IPR027834">
    <property type="entry name" value="PTCRA"/>
</dbReference>
<dbReference type="PANTHER" id="PTHR37866">
    <property type="entry name" value="PRE T-CELL ANTIGEN RECEPTOR ALPHA"/>
    <property type="match status" value="1"/>
</dbReference>
<dbReference type="PANTHER" id="PTHR37866:SF1">
    <property type="entry name" value="PRE T-CELL ANTIGEN RECEPTOR ALPHA"/>
    <property type="match status" value="1"/>
</dbReference>
<dbReference type="Pfam" id="PF15028">
    <property type="entry name" value="PTCRA"/>
    <property type="match status" value="1"/>
</dbReference>
<dbReference type="SUPFAM" id="SSF48726">
    <property type="entry name" value="Immunoglobulin"/>
    <property type="match status" value="1"/>
</dbReference>
<accession>P0C6B2</accession>
<sequence>MARTWLLLLLGVRCQALPSGIAGTPFPSLAPPITLLVDGRQHMLVVCLVLDAAPPGLDNPVWFSAGNGSALDAFTYGPSLAPDGTWTSLAQLSLPSEELEAWEPLVCHTRPGAGGQNRSTHPLQLSGESSTARSCFPEPLGGTQRQVLWLSLLRLLLFKLLLLDVLLTCSHLRLHVLAGQHLQPPPSRKSLPPTHRIWT</sequence>
<reference key="1">
    <citation type="journal article" date="1994" name="Science">
        <title>Analysis and expression of a cloned pre-T cell receptor gene.</title>
        <authorList>
            <person name="Saint-Ruf C."/>
            <person name="Ungewiss K."/>
            <person name="Groettrup M."/>
            <person name="Bruno L."/>
            <person name="Fehling H.J."/>
            <person name="von Boehmer H."/>
        </authorList>
    </citation>
    <scope>NUCLEOTIDE SEQUENCE [MRNA] (ISOFORM 1)</scope>
    <scope>SUBUNIT</scope>
    <scope>TISSUE SPECIFICITY</scope>
</reference>
<reference key="2">
    <citation type="journal article" date="1995" name="Immunogenetics">
        <title>Genomic structure and chromosomal location of the mouse pre-T-cell receptor alpha gene.</title>
        <authorList>
            <person name="Fehling H.J."/>
            <person name="Laplace C."/>
            <person name="Mattei M.-G."/>
            <person name="Saint-Ruf C."/>
            <person name="von Boehmer H."/>
        </authorList>
    </citation>
    <scope>NUCLEOTIDE SEQUENCE [GENOMIC DNA] (ISOFORM 1)</scope>
    <source>
        <strain>129/Ola</strain>
        <strain>129/Sv</strain>
        <tissue>Liver</tissue>
    </source>
</reference>
<reference key="3">
    <citation type="journal article" date="1998" name="J. Immunol.">
        <title>The expression in vivo of a second isoform of pT alpha: implications for the mechanism of pT alpha action.</title>
        <authorList>
            <person name="Barber D.F."/>
            <person name="Passoni L."/>
            <person name="Wen L."/>
            <person name="Geng L."/>
            <person name="Hayday A.C."/>
        </authorList>
    </citation>
    <scope>NUCLEOTIDE SEQUENCE [MRNA] (ISOFORMS 1 AND 2)</scope>
    <scope>FUNCTION</scope>
    <scope>TISSUE SPECIFICITY</scope>
</reference>
<reference key="4">
    <citation type="journal article" date="2004" name="Genome Res.">
        <title>The status, quality, and expansion of the NIH full-length cDNA project: the Mammalian Gene Collection (MGC).</title>
        <authorList>
            <consortium name="The MGC Project Team"/>
        </authorList>
    </citation>
    <scope>NUCLEOTIDE SEQUENCE [LARGE SCALE MRNA] (ISOFORM 1)</scope>
</reference>
<reference key="5">
    <citation type="journal article" date="1995" name="Nature">
        <title>Crucial role of the pre-T-cell receptor alpha gene in development of alpha beta but not gamma delta T cells.</title>
        <authorList>
            <person name="Fehling H.J."/>
            <person name="Krotkova A."/>
            <person name="Saint-Ruf C."/>
            <person name="von Boehmer H."/>
        </authorList>
    </citation>
    <scope>FUNCTION</scope>
</reference>
<proteinExistence type="evidence at protein level"/>
<protein>
    <recommendedName>
        <fullName evidence="9">Pre T-cell antigen receptor alpha</fullName>
        <shortName evidence="9">pT-alpha</shortName>
        <shortName evidence="9">pTa</shortName>
    </recommendedName>
    <alternativeName>
        <fullName>gp33</fullName>
    </alternativeName>
    <alternativeName>
        <fullName>pT-alpha-TCR</fullName>
    </alternativeName>
</protein>
<keyword id="KW-0025">Alternative splicing</keyword>
<keyword id="KW-1003">Cell membrane</keyword>
<keyword id="KW-1015">Disulfide bond</keyword>
<keyword id="KW-0325">Glycoprotein</keyword>
<keyword id="KW-0472">Membrane</keyword>
<keyword id="KW-0675">Receptor</keyword>
<keyword id="KW-1185">Reference proteome</keyword>
<keyword id="KW-0732">Signal</keyword>
<keyword id="KW-0812">Transmembrane</keyword>
<keyword id="KW-1133">Transmembrane helix</keyword>
<organism>
    <name type="scientific">Mus musculus</name>
    <name type="common">Mouse</name>
    <dbReference type="NCBI Taxonomy" id="10090"/>
    <lineage>
        <taxon>Eukaryota</taxon>
        <taxon>Metazoa</taxon>
        <taxon>Chordata</taxon>
        <taxon>Craniata</taxon>
        <taxon>Vertebrata</taxon>
        <taxon>Euteleostomi</taxon>
        <taxon>Mammalia</taxon>
        <taxon>Eutheria</taxon>
        <taxon>Euarchontoglires</taxon>
        <taxon>Glires</taxon>
        <taxon>Rodentia</taxon>
        <taxon>Myomorpha</taxon>
        <taxon>Muroidea</taxon>
        <taxon>Muridae</taxon>
        <taxon>Murinae</taxon>
        <taxon>Mus</taxon>
        <taxon>Mus</taxon>
    </lineage>
</organism>
<gene>
    <name evidence="9" type="primary">Ptcra</name>
</gene>
<evidence type="ECO:0000250" key="1"/>
<evidence type="ECO:0000250" key="2">
    <source>
        <dbReference type="UniProtKB" id="Q6ISU1"/>
    </source>
</evidence>
<evidence type="ECO:0000255" key="3"/>
<evidence type="ECO:0000269" key="4">
    <source>
    </source>
</evidence>
<evidence type="ECO:0000269" key="5">
    <source>
    </source>
</evidence>
<evidence type="ECO:0000269" key="6">
    <source>
    </source>
</evidence>
<evidence type="ECO:0000303" key="7">
    <source>
    </source>
</evidence>
<evidence type="ECO:0000305" key="8"/>
<evidence type="ECO:0000312" key="9">
    <source>
        <dbReference type="MGI" id="MGI:104857"/>
    </source>
</evidence>
<comment type="function">
    <text evidence="4 6">Component of the pre-T-cell receptor complex (composed of PTCRA, TCRB and the CD3 complex) that plays a crucial role in early T-cell development, particularly alpha-beta T cell differentiation (PubMed:9647201, PubMed:7596413). Isoform 1 acts to retain most TCRB intracellularly, while isoform 2 permits higher levels of cell surface TCRB expression and facilitates signaling from the CD3-TCRB complex.</text>
</comment>
<comment type="subunit">
    <text evidence="2 5">Heterodimer with TCRB; disulfide linked. This heterodimer assembles with CD3 proteins into a signaling-competent pre-T-cell receptor complex. Interacts with RHBDD1 (By similarity).</text>
</comment>
<comment type="subcellular location">
    <subcellularLocation>
        <location evidence="8">Membrane</location>
        <topology evidence="8">Single-pass type I membrane protein</topology>
    </subcellularLocation>
    <subcellularLocation>
        <location evidence="2">Cell membrane</location>
    </subcellularLocation>
</comment>
<comment type="alternative products">
    <event type="alternative splicing"/>
    <isoform>
        <id>P0C6B2-1</id>
        <name>1</name>
        <name>pTalpha-a</name>
        <sequence type="displayed"/>
    </isoform>
    <isoform>
        <id>P0C6B2-2</id>
        <name>2</name>
        <name>pTalpha-b</name>
        <sequence type="described" ref="VSP_031447"/>
    </isoform>
</comment>
<comment type="tissue specificity">
    <text evidence="5 6">Isoform 1 is expressed at higher levels than isoform 2 in the thymus while only isoform 2 is expressed in polyclonal beta-only cells. Isoform 1 shows a predominant expression in immature thymocytes.</text>
</comment>
<comment type="sequence caution" evidence="8">
    <conflict type="erroneous initiation">
        <sequence resource="EMBL-CDS" id="AAA58963"/>
    </conflict>
</comment>
<comment type="sequence caution" evidence="8">
    <conflict type="erroneous initiation">
        <sequence resource="EMBL-CDS" id="AAI19063"/>
    </conflict>
</comment>
<comment type="sequence caution" evidence="8">
    <conflict type="erroneous initiation">
        <sequence resource="EMBL-CDS" id="AAI20747"/>
    </conflict>
</comment>
<feature type="signal peptide" evidence="3">
    <location>
        <begin position="1"/>
        <end position="16"/>
    </location>
</feature>
<feature type="chain" id="PRO_0000319109" description="Pre T-cell antigen receptor alpha">
    <location>
        <begin position="17"/>
        <end position="199"/>
    </location>
</feature>
<feature type="topological domain" description="Extracellular" evidence="3">
    <location>
        <begin position="17"/>
        <end position="146"/>
    </location>
</feature>
<feature type="transmembrane region" description="Helical" evidence="3">
    <location>
        <begin position="147"/>
        <end position="167"/>
    </location>
</feature>
<feature type="topological domain" description="Cytoplasmic" evidence="3">
    <location>
        <begin position="168"/>
        <end position="199"/>
    </location>
</feature>
<feature type="glycosylation site" description="N-linked (GlcNAc...) asparagine" evidence="3">
    <location>
        <position position="67"/>
    </location>
</feature>
<feature type="glycosylation site" description="N-linked (GlcNAc...) asparagine" evidence="3">
    <location>
        <position position="117"/>
    </location>
</feature>
<feature type="disulfide bond" evidence="1">
    <location>
        <begin position="47"/>
        <end position="107"/>
    </location>
</feature>
<feature type="disulfide bond" description="Interchain (with TCRB)" evidence="1">
    <location>
        <position position="135"/>
    </location>
</feature>
<feature type="splice variant" id="VSP_031447" description="In isoform 2." evidence="7">
    <location>
        <begin position="20"/>
        <end position="126"/>
    </location>
</feature>